<sequence length="305" mass="34233">MRIVFMGTPSFAEVILRALVENEDKKIEVVGLFTQRDKPFGRKKELKAPETKTYILENHLNIPIFQPQSLKEPEVQILKGLKPDFIVVVAYGKILPKEVLTIAPCINLHASLLPKYRGASPIHEMILNDDRIYGISTMLMDLELDSGDILESASFLREDYLDLDALSLKLARMGATLLLSTLKNFHSITRKPQDHMQASFCKKIAKADGLVGFKDAKNLFLKSLAFKSWPEIFLENSLKLLEVELVENEKSHKEGEILAIDERGVLVGCLKGSVRIARLQAVGKKPLKAKDYLNGRRLKVGGILT</sequence>
<feature type="chain" id="PRO_0000082975" description="Methionyl-tRNA formyltransferase">
    <location>
        <begin position="1"/>
        <end position="305"/>
    </location>
</feature>
<feature type="binding site" evidence="1">
    <location>
        <begin position="111"/>
        <end position="114"/>
    </location>
    <ligand>
        <name>(6S)-5,6,7,8-tetrahydrofolate</name>
        <dbReference type="ChEBI" id="CHEBI:57453"/>
    </ligand>
</feature>
<name>FMT_HELPJ</name>
<protein>
    <recommendedName>
        <fullName evidence="1">Methionyl-tRNA formyltransferase</fullName>
        <ecNumber evidence="1">2.1.2.9</ecNumber>
    </recommendedName>
</protein>
<organism>
    <name type="scientific">Helicobacter pylori (strain J99 / ATCC 700824)</name>
    <name type="common">Campylobacter pylori J99</name>
    <dbReference type="NCBI Taxonomy" id="85963"/>
    <lineage>
        <taxon>Bacteria</taxon>
        <taxon>Pseudomonadati</taxon>
        <taxon>Campylobacterota</taxon>
        <taxon>Epsilonproteobacteria</taxon>
        <taxon>Campylobacterales</taxon>
        <taxon>Helicobacteraceae</taxon>
        <taxon>Helicobacter</taxon>
    </lineage>
</organism>
<proteinExistence type="inferred from homology"/>
<reference key="1">
    <citation type="journal article" date="1999" name="Nature">
        <title>Genomic sequence comparison of two unrelated isolates of the human gastric pathogen Helicobacter pylori.</title>
        <authorList>
            <person name="Alm R.A."/>
            <person name="Ling L.-S.L."/>
            <person name="Moir D.T."/>
            <person name="King B.L."/>
            <person name="Brown E.D."/>
            <person name="Doig P.C."/>
            <person name="Smith D.R."/>
            <person name="Noonan B."/>
            <person name="Guild B.C."/>
            <person name="deJonge B.L."/>
            <person name="Carmel G."/>
            <person name="Tummino P.J."/>
            <person name="Caruso A."/>
            <person name="Uria-Nickelsen M."/>
            <person name="Mills D.M."/>
            <person name="Ives C."/>
            <person name="Gibson R."/>
            <person name="Merberg D."/>
            <person name="Mills S.D."/>
            <person name="Jiang Q."/>
            <person name="Taylor D.E."/>
            <person name="Vovis G.F."/>
            <person name="Trust T.J."/>
        </authorList>
    </citation>
    <scope>NUCLEOTIDE SEQUENCE [LARGE SCALE GENOMIC DNA]</scope>
    <source>
        <strain>J99 / ATCC 700824</strain>
    </source>
</reference>
<dbReference type="EC" id="2.1.2.9" evidence="1"/>
<dbReference type="EMBL" id="AE001439">
    <property type="protein sequence ID" value="AAD06649.1"/>
    <property type="molecule type" value="Genomic_DNA"/>
</dbReference>
<dbReference type="PIR" id="C71853">
    <property type="entry name" value="C71853"/>
</dbReference>
<dbReference type="RefSeq" id="WP_001223537.1">
    <property type="nucleotide sequence ID" value="NC_000921.1"/>
</dbReference>
<dbReference type="SMR" id="Q9ZK72"/>
<dbReference type="KEGG" id="hpj:jhp_1069"/>
<dbReference type="PATRIC" id="fig|85963.30.peg.1519"/>
<dbReference type="eggNOG" id="COG0223">
    <property type="taxonomic scope" value="Bacteria"/>
</dbReference>
<dbReference type="Proteomes" id="UP000000804">
    <property type="component" value="Chromosome"/>
</dbReference>
<dbReference type="GO" id="GO:0005829">
    <property type="term" value="C:cytosol"/>
    <property type="evidence" value="ECO:0007669"/>
    <property type="project" value="TreeGrafter"/>
</dbReference>
<dbReference type="GO" id="GO:0004479">
    <property type="term" value="F:methionyl-tRNA formyltransferase activity"/>
    <property type="evidence" value="ECO:0007669"/>
    <property type="project" value="UniProtKB-UniRule"/>
</dbReference>
<dbReference type="CDD" id="cd08646">
    <property type="entry name" value="FMT_core_Met-tRNA-FMT_N"/>
    <property type="match status" value="1"/>
</dbReference>
<dbReference type="CDD" id="cd08704">
    <property type="entry name" value="Met_tRNA_FMT_C"/>
    <property type="match status" value="1"/>
</dbReference>
<dbReference type="FunFam" id="3.40.50.12230:FF:000001">
    <property type="entry name" value="Methionyl-tRNA formyltransferase"/>
    <property type="match status" value="1"/>
</dbReference>
<dbReference type="Gene3D" id="3.40.50.12230">
    <property type="match status" value="1"/>
</dbReference>
<dbReference type="HAMAP" id="MF_00182">
    <property type="entry name" value="Formyl_trans"/>
    <property type="match status" value="1"/>
</dbReference>
<dbReference type="InterPro" id="IPR005794">
    <property type="entry name" value="Fmt"/>
</dbReference>
<dbReference type="InterPro" id="IPR005793">
    <property type="entry name" value="Formyl_trans_C"/>
</dbReference>
<dbReference type="InterPro" id="IPR002376">
    <property type="entry name" value="Formyl_transf_N"/>
</dbReference>
<dbReference type="InterPro" id="IPR036477">
    <property type="entry name" value="Formyl_transf_N_sf"/>
</dbReference>
<dbReference type="InterPro" id="IPR011034">
    <property type="entry name" value="Formyl_transferase-like_C_sf"/>
</dbReference>
<dbReference type="InterPro" id="IPR044135">
    <property type="entry name" value="Met-tRNA-FMT_C"/>
</dbReference>
<dbReference type="InterPro" id="IPR041711">
    <property type="entry name" value="Met-tRNA-FMT_N"/>
</dbReference>
<dbReference type="NCBIfam" id="TIGR00460">
    <property type="entry name" value="fmt"/>
    <property type="match status" value="1"/>
</dbReference>
<dbReference type="PANTHER" id="PTHR11138">
    <property type="entry name" value="METHIONYL-TRNA FORMYLTRANSFERASE"/>
    <property type="match status" value="1"/>
</dbReference>
<dbReference type="PANTHER" id="PTHR11138:SF5">
    <property type="entry name" value="METHIONYL-TRNA FORMYLTRANSFERASE, MITOCHONDRIAL"/>
    <property type="match status" value="1"/>
</dbReference>
<dbReference type="Pfam" id="PF02911">
    <property type="entry name" value="Formyl_trans_C"/>
    <property type="match status" value="1"/>
</dbReference>
<dbReference type="Pfam" id="PF00551">
    <property type="entry name" value="Formyl_trans_N"/>
    <property type="match status" value="1"/>
</dbReference>
<dbReference type="SUPFAM" id="SSF50486">
    <property type="entry name" value="FMT C-terminal domain-like"/>
    <property type="match status" value="1"/>
</dbReference>
<dbReference type="SUPFAM" id="SSF53328">
    <property type="entry name" value="Formyltransferase"/>
    <property type="match status" value="1"/>
</dbReference>
<keyword id="KW-0648">Protein biosynthesis</keyword>
<keyword id="KW-0808">Transferase</keyword>
<gene>
    <name evidence="1" type="primary">fmt</name>
    <name type="ordered locus">jhp_1069</name>
</gene>
<comment type="function">
    <text evidence="1">Attaches a formyl group to the free amino group of methionyl-tRNA(fMet). The formyl group appears to play a dual role in the initiator identity of N-formylmethionyl-tRNA by promoting its recognition by IF2 and preventing the misappropriation of this tRNA by the elongation apparatus.</text>
</comment>
<comment type="catalytic activity">
    <reaction evidence="1">
        <text>L-methionyl-tRNA(fMet) + (6R)-10-formyltetrahydrofolate = N-formyl-L-methionyl-tRNA(fMet) + (6S)-5,6,7,8-tetrahydrofolate + H(+)</text>
        <dbReference type="Rhea" id="RHEA:24380"/>
        <dbReference type="Rhea" id="RHEA-COMP:9952"/>
        <dbReference type="Rhea" id="RHEA-COMP:9953"/>
        <dbReference type="ChEBI" id="CHEBI:15378"/>
        <dbReference type="ChEBI" id="CHEBI:57453"/>
        <dbReference type="ChEBI" id="CHEBI:78530"/>
        <dbReference type="ChEBI" id="CHEBI:78844"/>
        <dbReference type="ChEBI" id="CHEBI:195366"/>
        <dbReference type="EC" id="2.1.2.9"/>
    </reaction>
</comment>
<comment type="similarity">
    <text evidence="1 2">Belongs to the Fmt family.</text>
</comment>
<accession>Q9ZK72</accession>
<evidence type="ECO:0000255" key="1">
    <source>
        <dbReference type="HAMAP-Rule" id="MF_00182"/>
    </source>
</evidence>
<evidence type="ECO:0000305" key="2"/>